<evidence type="ECO:0000255" key="1">
    <source>
        <dbReference type="HAMAP-Rule" id="MF_00418"/>
    </source>
</evidence>
<evidence type="ECO:0000305" key="2"/>
<keyword id="KW-0028">Amino-acid biosynthesis</keyword>
<keyword id="KW-0963">Cytoplasm</keyword>
<keyword id="KW-0220">Diaminopimelate biosynthesis</keyword>
<keyword id="KW-0456">Lyase</keyword>
<keyword id="KW-0457">Lysine biosynthesis</keyword>
<keyword id="KW-0704">Schiff base</keyword>
<reference key="1">
    <citation type="journal article" date="2007" name="J. Bacteriol.">
        <title>The complete genome sequence of Campylobacter jejuni strain 81116 (NCTC11828).</title>
        <authorList>
            <person name="Pearson B.M."/>
            <person name="Gaskin D.J.H."/>
            <person name="Segers R.P.A.M."/>
            <person name="Wells J.M."/>
            <person name="Nuijten P.J.M."/>
            <person name="van Vliet A.H.M."/>
        </authorList>
    </citation>
    <scope>NUCLEOTIDE SEQUENCE [LARGE SCALE GENOMIC DNA]</scope>
    <source>
        <strain>81116 / NCTC 11828</strain>
    </source>
</reference>
<organism>
    <name type="scientific">Campylobacter jejuni subsp. jejuni serotype O:6 (strain 81116 / NCTC 11828)</name>
    <dbReference type="NCBI Taxonomy" id="407148"/>
    <lineage>
        <taxon>Bacteria</taxon>
        <taxon>Pseudomonadati</taxon>
        <taxon>Campylobacterota</taxon>
        <taxon>Epsilonproteobacteria</taxon>
        <taxon>Campylobacterales</taxon>
        <taxon>Campylobacteraceae</taxon>
        <taxon>Campylobacter</taxon>
    </lineage>
</organism>
<proteinExistence type="inferred from homology"/>
<protein>
    <recommendedName>
        <fullName evidence="1">4-hydroxy-tetrahydrodipicolinate synthase</fullName>
        <shortName evidence="1">HTPA synthase</shortName>
        <ecNumber evidence="1">4.3.3.7</ecNumber>
    </recommendedName>
</protein>
<sequence>MDKNIIIGAMTALITPFKNGKVDEQSYARLIKRQIENGIDAVVPVGTTGESATLTHEEHRTCIEIAVETCKGTKVKVLAGAGSNATHEAVGLAKFAKEHGADGILSVAPYYNKPTQQGLYEHYKAIAQSVDIPVLLYNVPGRTGCEISTDTIIKLFRDCENIYGVKEASGNIDKCVDLLAHEPRMMLISGEDAINYPILSNGGKGVISVTSNLLPDMISALTHFALDENYKEAKKINDELYNINKILFCESNPIPIKTAMYIAGLIESLEFRLPLCPPSKENFAKIEEVMKKYKIKGF</sequence>
<dbReference type="EC" id="4.3.3.7" evidence="1"/>
<dbReference type="EMBL" id="CP000814">
    <property type="protein sequence ID" value="ABV52356.1"/>
    <property type="molecule type" value="Genomic_DNA"/>
</dbReference>
<dbReference type="RefSeq" id="WP_002865994.1">
    <property type="nucleotide sequence ID" value="NC_009839.1"/>
</dbReference>
<dbReference type="SMR" id="A8FLL9"/>
<dbReference type="KEGG" id="cju:C8J_0757"/>
<dbReference type="HOGENOM" id="CLU_049343_7_0_7"/>
<dbReference type="UniPathway" id="UPA00034">
    <property type="reaction ID" value="UER00017"/>
</dbReference>
<dbReference type="GO" id="GO:0005829">
    <property type="term" value="C:cytosol"/>
    <property type="evidence" value="ECO:0007669"/>
    <property type="project" value="TreeGrafter"/>
</dbReference>
<dbReference type="GO" id="GO:0008840">
    <property type="term" value="F:4-hydroxy-tetrahydrodipicolinate synthase activity"/>
    <property type="evidence" value="ECO:0007669"/>
    <property type="project" value="UniProtKB-UniRule"/>
</dbReference>
<dbReference type="GO" id="GO:0019877">
    <property type="term" value="P:diaminopimelate biosynthetic process"/>
    <property type="evidence" value="ECO:0007669"/>
    <property type="project" value="UniProtKB-UniRule"/>
</dbReference>
<dbReference type="GO" id="GO:0009089">
    <property type="term" value="P:lysine biosynthetic process via diaminopimelate"/>
    <property type="evidence" value="ECO:0007669"/>
    <property type="project" value="UniProtKB-UniRule"/>
</dbReference>
<dbReference type="CDD" id="cd00950">
    <property type="entry name" value="DHDPS"/>
    <property type="match status" value="1"/>
</dbReference>
<dbReference type="Gene3D" id="3.20.20.70">
    <property type="entry name" value="Aldolase class I"/>
    <property type="match status" value="1"/>
</dbReference>
<dbReference type="HAMAP" id="MF_00418">
    <property type="entry name" value="DapA"/>
    <property type="match status" value="1"/>
</dbReference>
<dbReference type="InterPro" id="IPR013785">
    <property type="entry name" value="Aldolase_TIM"/>
</dbReference>
<dbReference type="InterPro" id="IPR005263">
    <property type="entry name" value="DapA"/>
</dbReference>
<dbReference type="InterPro" id="IPR002220">
    <property type="entry name" value="DapA-like"/>
</dbReference>
<dbReference type="InterPro" id="IPR020625">
    <property type="entry name" value="Schiff_base-form_aldolases_AS"/>
</dbReference>
<dbReference type="InterPro" id="IPR020624">
    <property type="entry name" value="Schiff_base-form_aldolases_CS"/>
</dbReference>
<dbReference type="NCBIfam" id="TIGR00674">
    <property type="entry name" value="dapA"/>
    <property type="match status" value="1"/>
</dbReference>
<dbReference type="PANTHER" id="PTHR12128:SF66">
    <property type="entry name" value="4-HYDROXY-2-OXOGLUTARATE ALDOLASE, MITOCHONDRIAL"/>
    <property type="match status" value="1"/>
</dbReference>
<dbReference type="PANTHER" id="PTHR12128">
    <property type="entry name" value="DIHYDRODIPICOLINATE SYNTHASE"/>
    <property type="match status" value="1"/>
</dbReference>
<dbReference type="Pfam" id="PF00701">
    <property type="entry name" value="DHDPS"/>
    <property type="match status" value="1"/>
</dbReference>
<dbReference type="PIRSF" id="PIRSF001365">
    <property type="entry name" value="DHDPS"/>
    <property type="match status" value="1"/>
</dbReference>
<dbReference type="PRINTS" id="PR00146">
    <property type="entry name" value="DHPICSNTHASE"/>
</dbReference>
<dbReference type="SMART" id="SM01130">
    <property type="entry name" value="DHDPS"/>
    <property type="match status" value="1"/>
</dbReference>
<dbReference type="SUPFAM" id="SSF51569">
    <property type="entry name" value="Aldolase"/>
    <property type="match status" value="1"/>
</dbReference>
<dbReference type="PROSITE" id="PS00665">
    <property type="entry name" value="DHDPS_1"/>
    <property type="match status" value="1"/>
</dbReference>
<dbReference type="PROSITE" id="PS00666">
    <property type="entry name" value="DHDPS_2"/>
    <property type="match status" value="1"/>
</dbReference>
<accession>A8FLL9</accession>
<gene>
    <name evidence="1" type="primary">dapA</name>
    <name type="ordered locus">C8J_0757</name>
</gene>
<name>DAPA_CAMJ8</name>
<feature type="chain" id="PRO_1000072292" description="4-hydroxy-tetrahydrodipicolinate synthase">
    <location>
        <begin position="1"/>
        <end position="298"/>
    </location>
</feature>
<feature type="active site" description="Proton donor/acceptor" evidence="1">
    <location>
        <position position="137"/>
    </location>
</feature>
<feature type="active site" description="Schiff-base intermediate with substrate" evidence="1">
    <location>
        <position position="166"/>
    </location>
</feature>
<feature type="binding site" evidence="1">
    <location>
        <position position="48"/>
    </location>
    <ligand>
        <name>pyruvate</name>
        <dbReference type="ChEBI" id="CHEBI:15361"/>
    </ligand>
</feature>
<feature type="binding site" evidence="1">
    <location>
        <position position="207"/>
    </location>
    <ligand>
        <name>pyruvate</name>
        <dbReference type="ChEBI" id="CHEBI:15361"/>
    </ligand>
</feature>
<feature type="site" description="Part of a proton relay during catalysis" evidence="1">
    <location>
        <position position="47"/>
    </location>
</feature>
<feature type="site" description="Part of a proton relay during catalysis" evidence="1">
    <location>
        <position position="111"/>
    </location>
</feature>
<comment type="function">
    <text evidence="1">Catalyzes the condensation of (S)-aspartate-beta-semialdehyde [(S)-ASA] and pyruvate to 4-hydroxy-tetrahydrodipicolinate (HTPA).</text>
</comment>
<comment type="catalytic activity">
    <reaction evidence="1">
        <text>L-aspartate 4-semialdehyde + pyruvate = (2S,4S)-4-hydroxy-2,3,4,5-tetrahydrodipicolinate + H2O + H(+)</text>
        <dbReference type="Rhea" id="RHEA:34171"/>
        <dbReference type="ChEBI" id="CHEBI:15361"/>
        <dbReference type="ChEBI" id="CHEBI:15377"/>
        <dbReference type="ChEBI" id="CHEBI:15378"/>
        <dbReference type="ChEBI" id="CHEBI:67139"/>
        <dbReference type="ChEBI" id="CHEBI:537519"/>
        <dbReference type="EC" id="4.3.3.7"/>
    </reaction>
</comment>
<comment type="pathway">
    <text evidence="1">Amino-acid biosynthesis; L-lysine biosynthesis via DAP pathway; (S)-tetrahydrodipicolinate from L-aspartate: step 3/4.</text>
</comment>
<comment type="subunit">
    <text evidence="1">Homotetramer; dimer of dimers.</text>
</comment>
<comment type="subcellular location">
    <subcellularLocation>
        <location evidence="1">Cytoplasm</location>
    </subcellularLocation>
</comment>
<comment type="similarity">
    <text evidence="1">Belongs to the DapA family.</text>
</comment>
<comment type="caution">
    <text evidence="2">Was originally thought to be a dihydrodipicolinate synthase (DHDPS), catalyzing the condensation of (S)-aspartate-beta-semialdehyde [(S)-ASA] and pyruvate to dihydrodipicolinate (DHDP). However, it was shown in E.coli that the product of the enzymatic reaction is not dihydrodipicolinate but in fact (4S)-4-hydroxy-2,3,4,5-tetrahydro-(2S)-dipicolinic acid (HTPA), and that the consecutive dehydration reaction leading to DHDP is not spontaneous but catalyzed by DapB.</text>
</comment>